<gene>
    <name evidence="1" type="primary">kup2</name>
    <name type="ordered locus">Smed_6041</name>
</gene>
<evidence type="ECO:0000255" key="1">
    <source>
        <dbReference type="HAMAP-Rule" id="MF_01522"/>
    </source>
</evidence>
<proteinExistence type="inferred from homology"/>
<sequence>MADSLDHAPAQANNLPQFLAMTIGAIGVVYGDIGTSPLYAFREALRPFGPDGVERAEVVGLISLMLWTLTIIVTFKYVLFLLRADNDGEGGTLSLLALLMKKAPRYTTLMFMAGILGAALFIGDAMITPALSVLSAVEGLKLVTPAFHDYVLPISVGIMVLLFAVQSRGTGAVSIFFGPITLIWFLVLGAAGVAHIGDDLAILAAFNPVNAVTFLWNAGFVGFIVLGAVFLTVTGAEALYADLGHFGRGPIQAAWFAVVFPALTLNYLGQGALVLSHPEAVSDPFFLMFPNWALLPVVLLATAATIIASQAVITGAFSLVRQAINLGFLPRFEICFTSETQTGQIYLPFVNNALLAGVIVLMFMFGSSESLATAYGISVTGAMVVTTVLAFEFARHQWGWSTLTATAVLLPLLVLELFFLGANLFKIHDGGYVPILIAGTLMTTMWTWRKGVSLLREKTARQDIPLSQFMAMVERKSEHAPVEVPGTAIFLTATPDTTPAVLLHNIKHNHVLHQHNVILTIKTARVPYVPEKDRYTIEKLSDRFSLLELRFGFMDDQNVSRALARCRKEGFKFEIMSTSFYLGRRKLIAAPQSGLPQWQDKLFIAMADSAIDPTEYFHLPPNRVVELGEQVVI</sequence>
<reference key="1">
    <citation type="submission" date="2007-06" db="EMBL/GenBank/DDBJ databases">
        <title>Complete sequence of Sinorhizobium medicae WSM419 plasmid pSMED02.</title>
        <authorList>
            <consortium name="US DOE Joint Genome Institute"/>
            <person name="Copeland A."/>
            <person name="Lucas S."/>
            <person name="Lapidus A."/>
            <person name="Barry K."/>
            <person name="Glavina del Rio T."/>
            <person name="Dalin E."/>
            <person name="Tice H."/>
            <person name="Pitluck S."/>
            <person name="Chain P."/>
            <person name="Malfatti S."/>
            <person name="Shin M."/>
            <person name="Vergez L."/>
            <person name="Schmutz J."/>
            <person name="Larimer F."/>
            <person name="Land M."/>
            <person name="Hauser L."/>
            <person name="Kyrpides N."/>
            <person name="Mikhailova N."/>
            <person name="Reeve W.G."/>
            <person name="Richardson P."/>
        </authorList>
    </citation>
    <scope>NUCLEOTIDE SEQUENCE [LARGE SCALE GENOMIC DNA]</scope>
    <source>
        <strain>WSM419</strain>
    </source>
</reference>
<dbReference type="EMBL" id="CP000740">
    <property type="protein sequence ID" value="ABR64700.1"/>
    <property type="molecule type" value="Genomic_DNA"/>
</dbReference>
<dbReference type="RefSeq" id="WP_011970808.1">
    <property type="nucleotide sequence ID" value="NC_009621.1"/>
</dbReference>
<dbReference type="RefSeq" id="YP_001314633.1">
    <property type="nucleotide sequence ID" value="NC_009621.1"/>
</dbReference>
<dbReference type="KEGG" id="smd:Smed_6041"/>
<dbReference type="PATRIC" id="fig|366394.8.peg.2549"/>
<dbReference type="eggNOG" id="COG3158">
    <property type="taxonomic scope" value="Bacteria"/>
</dbReference>
<dbReference type="HOGENOM" id="CLU_008142_4_2_5"/>
<dbReference type="OrthoDB" id="9805577at2"/>
<dbReference type="Proteomes" id="UP000001108">
    <property type="component" value="Plasmid pSMED02"/>
</dbReference>
<dbReference type="GO" id="GO:0005886">
    <property type="term" value="C:plasma membrane"/>
    <property type="evidence" value="ECO:0007669"/>
    <property type="project" value="UniProtKB-SubCell"/>
</dbReference>
<dbReference type="GO" id="GO:0015079">
    <property type="term" value="F:potassium ion transmembrane transporter activity"/>
    <property type="evidence" value="ECO:0007669"/>
    <property type="project" value="UniProtKB-UniRule"/>
</dbReference>
<dbReference type="GO" id="GO:0015293">
    <property type="term" value="F:symporter activity"/>
    <property type="evidence" value="ECO:0007669"/>
    <property type="project" value="UniProtKB-UniRule"/>
</dbReference>
<dbReference type="HAMAP" id="MF_01522">
    <property type="entry name" value="Kup"/>
    <property type="match status" value="1"/>
</dbReference>
<dbReference type="InterPro" id="IPR003855">
    <property type="entry name" value="K+_transporter"/>
</dbReference>
<dbReference type="InterPro" id="IPR053952">
    <property type="entry name" value="K_trans_C"/>
</dbReference>
<dbReference type="InterPro" id="IPR053951">
    <property type="entry name" value="K_trans_N"/>
</dbReference>
<dbReference type="InterPro" id="IPR023051">
    <property type="entry name" value="Kup"/>
</dbReference>
<dbReference type="PANTHER" id="PTHR30540:SF79">
    <property type="entry name" value="LOW AFFINITY POTASSIUM TRANSPORT SYSTEM PROTEIN KUP"/>
    <property type="match status" value="1"/>
</dbReference>
<dbReference type="PANTHER" id="PTHR30540">
    <property type="entry name" value="OSMOTIC STRESS POTASSIUM TRANSPORTER"/>
    <property type="match status" value="1"/>
</dbReference>
<dbReference type="Pfam" id="PF02705">
    <property type="entry name" value="K_trans"/>
    <property type="match status" value="1"/>
</dbReference>
<dbReference type="Pfam" id="PF22776">
    <property type="entry name" value="K_trans_C"/>
    <property type="match status" value="1"/>
</dbReference>
<keyword id="KW-0997">Cell inner membrane</keyword>
<keyword id="KW-1003">Cell membrane</keyword>
<keyword id="KW-0406">Ion transport</keyword>
<keyword id="KW-0472">Membrane</keyword>
<keyword id="KW-0614">Plasmid</keyword>
<keyword id="KW-0630">Potassium</keyword>
<keyword id="KW-0633">Potassium transport</keyword>
<keyword id="KW-0769">Symport</keyword>
<keyword id="KW-0812">Transmembrane</keyword>
<keyword id="KW-1133">Transmembrane helix</keyword>
<keyword id="KW-0813">Transport</keyword>
<organism>
    <name type="scientific">Sinorhizobium medicae (strain WSM419)</name>
    <name type="common">Ensifer medicae</name>
    <dbReference type="NCBI Taxonomy" id="366394"/>
    <lineage>
        <taxon>Bacteria</taxon>
        <taxon>Pseudomonadati</taxon>
        <taxon>Pseudomonadota</taxon>
        <taxon>Alphaproteobacteria</taxon>
        <taxon>Hyphomicrobiales</taxon>
        <taxon>Rhizobiaceae</taxon>
        <taxon>Sinorhizobium/Ensifer group</taxon>
        <taxon>Sinorhizobium</taxon>
    </lineage>
</organism>
<name>KUP2_SINMW</name>
<accession>A6UM20</accession>
<feature type="chain" id="PRO_0000315991" description="Probable potassium transport system protein Kup 2">
    <location>
        <begin position="1"/>
        <end position="633"/>
    </location>
</feature>
<feature type="transmembrane region" description="Helical" evidence="1">
    <location>
        <begin position="18"/>
        <end position="38"/>
    </location>
</feature>
<feature type="transmembrane region" description="Helical" evidence="1">
    <location>
        <begin position="61"/>
        <end position="81"/>
    </location>
</feature>
<feature type="transmembrane region" description="Helical" evidence="1">
    <location>
        <begin position="109"/>
        <end position="129"/>
    </location>
</feature>
<feature type="transmembrane region" description="Helical" evidence="1">
    <location>
        <begin position="145"/>
        <end position="165"/>
    </location>
</feature>
<feature type="transmembrane region" description="Helical" evidence="1">
    <location>
        <begin position="173"/>
        <end position="193"/>
    </location>
</feature>
<feature type="transmembrane region" description="Helical" evidence="1">
    <location>
        <begin position="211"/>
        <end position="231"/>
    </location>
</feature>
<feature type="transmembrane region" description="Helical" evidence="1">
    <location>
        <begin position="255"/>
        <end position="275"/>
    </location>
</feature>
<feature type="transmembrane region" description="Helical" evidence="1">
    <location>
        <begin position="287"/>
        <end position="307"/>
    </location>
</feature>
<feature type="transmembrane region" description="Helical" evidence="1">
    <location>
        <begin position="345"/>
        <end position="365"/>
    </location>
</feature>
<feature type="transmembrane region" description="Helical" evidence="1">
    <location>
        <begin position="371"/>
        <end position="391"/>
    </location>
</feature>
<feature type="transmembrane region" description="Helical" evidence="1">
    <location>
        <begin position="405"/>
        <end position="425"/>
    </location>
</feature>
<feature type="transmembrane region" description="Helical" evidence="1">
    <location>
        <begin position="427"/>
        <end position="447"/>
    </location>
</feature>
<comment type="function">
    <text evidence="1">Transport of potassium into the cell. Likely operates as a K(+):H(+) symporter.</text>
</comment>
<comment type="catalytic activity">
    <reaction evidence="1">
        <text>K(+)(in) + H(+)(in) = K(+)(out) + H(+)(out)</text>
        <dbReference type="Rhea" id="RHEA:28490"/>
        <dbReference type="ChEBI" id="CHEBI:15378"/>
        <dbReference type="ChEBI" id="CHEBI:29103"/>
    </reaction>
    <physiologicalReaction direction="right-to-left" evidence="1">
        <dbReference type="Rhea" id="RHEA:28492"/>
    </physiologicalReaction>
</comment>
<comment type="subcellular location">
    <subcellularLocation>
        <location evidence="1">Cell inner membrane</location>
        <topology evidence="1">Multi-pass membrane protein</topology>
    </subcellularLocation>
</comment>
<comment type="similarity">
    <text evidence="1">Belongs to the HAK/KUP transporter (TC 2.A.72) family.</text>
</comment>
<geneLocation type="plasmid">
    <name>pSMED02</name>
</geneLocation>
<protein>
    <recommendedName>
        <fullName evidence="1">Probable potassium transport system protein Kup 2</fullName>
    </recommendedName>
</protein>